<gene>
    <name evidence="1" type="primary">GET3</name>
    <name type="ORF">PADG_00622</name>
</gene>
<evidence type="ECO:0000255" key="1">
    <source>
        <dbReference type="HAMAP-Rule" id="MF_03112"/>
    </source>
</evidence>
<proteinExistence type="inferred from homology"/>
<dbReference type="EC" id="3.6.-.-" evidence="1"/>
<dbReference type="EMBL" id="KN275957">
    <property type="protein sequence ID" value="EEH44333.1"/>
    <property type="molecule type" value="Genomic_DNA"/>
</dbReference>
<dbReference type="RefSeq" id="XP_010756429.1">
    <property type="nucleotide sequence ID" value="XM_010758127.1"/>
</dbReference>
<dbReference type="SMR" id="C1G182"/>
<dbReference type="FunCoup" id="C1G182">
    <property type="interactions" value="936"/>
</dbReference>
<dbReference type="STRING" id="502780.C1G182"/>
<dbReference type="GeneID" id="22580437"/>
<dbReference type="KEGG" id="pbn:PADG_00622"/>
<dbReference type="VEuPathDB" id="FungiDB:PADG_00622"/>
<dbReference type="eggNOG" id="KOG2825">
    <property type="taxonomic scope" value="Eukaryota"/>
</dbReference>
<dbReference type="HOGENOM" id="CLU_040761_0_0_1"/>
<dbReference type="InParanoid" id="C1G182"/>
<dbReference type="OMA" id="MDAPYEF"/>
<dbReference type="OrthoDB" id="34831at33183"/>
<dbReference type="Proteomes" id="UP000001628">
    <property type="component" value="Unassembled WGS sequence"/>
</dbReference>
<dbReference type="GO" id="GO:0043529">
    <property type="term" value="C:GET complex"/>
    <property type="evidence" value="ECO:0007669"/>
    <property type="project" value="EnsemblFungi"/>
</dbReference>
<dbReference type="GO" id="GO:0005524">
    <property type="term" value="F:ATP binding"/>
    <property type="evidence" value="ECO:0007669"/>
    <property type="project" value="UniProtKB-UniRule"/>
</dbReference>
<dbReference type="GO" id="GO:0016887">
    <property type="term" value="F:ATP hydrolysis activity"/>
    <property type="evidence" value="ECO:0007669"/>
    <property type="project" value="EnsemblFungi"/>
</dbReference>
<dbReference type="GO" id="GO:0005085">
    <property type="term" value="F:guanyl-nucleotide exchange factor activity"/>
    <property type="evidence" value="ECO:0007669"/>
    <property type="project" value="EnsemblFungi"/>
</dbReference>
<dbReference type="GO" id="GO:0042802">
    <property type="term" value="F:identical protein binding"/>
    <property type="evidence" value="ECO:0007669"/>
    <property type="project" value="EnsemblFungi"/>
</dbReference>
<dbReference type="GO" id="GO:0046872">
    <property type="term" value="F:metal ion binding"/>
    <property type="evidence" value="ECO:0007669"/>
    <property type="project" value="UniProtKB-KW"/>
</dbReference>
<dbReference type="GO" id="GO:0044183">
    <property type="term" value="F:protein folding chaperone"/>
    <property type="evidence" value="ECO:0007669"/>
    <property type="project" value="EnsemblFungi"/>
</dbReference>
<dbReference type="GO" id="GO:0051082">
    <property type="term" value="F:unfolded protein binding"/>
    <property type="evidence" value="ECO:0007669"/>
    <property type="project" value="EnsemblFungi"/>
</dbReference>
<dbReference type="GO" id="GO:0034599">
    <property type="term" value="P:cellular response to oxidative stress"/>
    <property type="evidence" value="ECO:0007669"/>
    <property type="project" value="EnsemblFungi"/>
</dbReference>
<dbReference type="GO" id="GO:0000750">
    <property type="term" value="P:pheromone-dependent signal transduction involved in conjugation with cellular fusion"/>
    <property type="evidence" value="ECO:0007669"/>
    <property type="project" value="EnsemblFungi"/>
</dbReference>
<dbReference type="GO" id="GO:0006620">
    <property type="term" value="P:post-translational protein targeting to endoplasmic reticulum membrane"/>
    <property type="evidence" value="ECO:0007669"/>
    <property type="project" value="EnsemblFungi"/>
</dbReference>
<dbReference type="GO" id="GO:0009408">
    <property type="term" value="P:response to heat"/>
    <property type="evidence" value="ECO:0007669"/>
    <property type="project" value="EnsemblFungi"/>
</dbReference>
<dbReference type="GO" id="GO:0010038">
    <property type="term" value="P:response to metal ion"/>
    <property type="evidence" value="ECO:0007669"/>
    <property type="project" value="EnsemblFungi"/>
</dbReference>
<dbReference type="GO" id="GO:0006890">
    <property type="term" value="P:retrograde vesicle-mediated transport, Golgi to endoplasmic reticulum"/>
    <property type="evidence" value="ECO:0007669"/>
    <property type="project" value="EnsemblFungi"/>
</dbReference>
<dbReference type="GO" id="GO:0071816">
    <property type="term" value="P:tail-anchored membrane protein insertion into ER membrane"/>
    <property type="evidence" value="ECO:0007669"/>
    <property type="project" value="EnsemblFungi"/>
</dbReference>
<dbReference type="CDD" id="cd02035">
    <property type="entry name" value="ArsA"/>
    <property type="match status" value="1"/>
</dbReference>
<dbReference type="FunFam" id="3.40.50.300:FF:000235">
    <property type="entry name" value="ATPase ASNA1"/>
    <property type="match status" value="1"/>
</dbReference>
<dbReference type="Gene3D" id="3.40.50.300">
    <property type="entry name" value="P-loop containing nucleotide triphosphate hydrolases"/>
    <property type="match status" value="1"/>
</dbReference>
<dbReference type="HAMAP" id="MF_03112">
    <property type="entry name" value="Asna1_Get3"/>
    <property type="match status" value="1"/>
</dbReference>
<dbReference type="InterPro" id="IPR025723">
    <property type="entry name" value="Anion-transp_ATPase-like_dom"/>
</dbReference>
<dbReference type="InterPro" id="IPR016300">
    <property type="entry name" value="ATPase_ArsA/GET3"/>
</dbReference>
<dbReference type="InterPro" id="IPR027542">
    <property type="entry name" value="ATPase_ArsA/GET3_euk"/>
</dbReference>
<dbReference type="InterPro" id="IPR027417">
    <property type="entry name" value="P-loop_NTPase"/>
</dbReference>
<dbReference type="NCBIfam" id="TIGR00345">
    <property type="entry name" value="GET3_arsA_TRC40"/>
    <property type="match status" value="1"/>
</dbReference>
<dbReference type="PANTHER" id="PTHR10803">
    <property type="entry name" value="ARSENICAL PUMP-DRIVING ATPASE ARSENITE-TRANSLOCATING ATPASE"/>
    <property type="match status" value="1"/>
</dbReference>
<dbReference type="PANTHER" id="PTHR10803:SF3">
    <property type="entry name" value="ATPASE GET3"/>
    <property type="match status" value="1"/>
</dbReference>
<dbReference type="Pfam" id="PF02374">
    <property type="entry name" value="ArsA_ATPase"/>
    <property type="match status" value="1"/>
</dbReference>
<dbReference type="SUPFAM" id="SSF52540">
    <property type="entry name" value="P-loop containing nucleoside triphosphate hydrolases"/>
    <property type="match status" value="1"/>
</dbReference>
<reference key="1">
    <citation type="journal article" date="2011" name="PLoS Genet.">
        <title>Comparative genomic analysis of human fungal pathogens causing paracoccidioidomycosis.</title>
        <authorList>
            <person name="Desjardins C.A."/>
            <person name="Champion M.D."/>
            <person name="Holder J.W."/>
            <person name="Muszewska A."/>
            <person name="Goldberg J."/>
            <person name="Bailao A.M."/>
            <person name="Brigido M.M."/>
            <person name="Ferreira M.E."/>
            <person name="Garcia A.M."/>
            <person name="Grynberg M."/>
            <person name="Gujja S."/>
            <person name="Heiman D.I."/>
            <person name="Henn M.R."/>
            <person name="Kodira C.D."/>
            <person name="Leon-Narvaez H."/>
            <person name="Longo L.V.G."/>
            <person name="Ma L.-J."/>
            <person name="Malavazi I."/>
            <person name="Matsuo A.L."/>
            <person name="Morais F.V."/>
            <person name="Pereira M."/>
            <person name="Rodriguez-Brito S."/>
            <person name="Sakthikumar S."/>
            <person name="Salem-Izacc S.M."/>
            <person name="Sykes S.M."/>
            <person name="Teixeira M.M."/>
            <person name="Vallejo M.C."/>
            <person name="Walter M.E."/>
            <person name="Yandava C."/>
            <person name="Young S."/>
            <person name="Zeng Q."/>
            <person name="Zucker J."/>
            <person name="Felipe M.S."/>
            <person name="Goldman G.H."/>
            <person name="Haas B.J."/>
            <person name="McEwen J.G."/>
            <person name="Nino-Vega G."/>
            <person name="Puccia R."/>
            <person name="San-Blas G."/>
            <person name="Soares C.M."/>
            <person name="Birren B.W."/>
            <person name="Cuomo C.A."/>
        </authorList>
    </citation>
    <scope>NUCLEOTIDE SEQUENCE [LARGE SCALE GENOMIC DNA]</scope>
    <source>
        <strain>Pb18</strain>
    </source>
</reference>
<comment type="function">
    <text evidence="1">ATPase required for the post-translational delivery of tail-anchored (TA) proteins to the endoplasmic reticulum. Recognizes and selectively binds the transmembrane domain of TA proteins in the cytosol. This complex then targets to the endoplasmic reticulum by membrane-bound receptors, where the tail-anchored protein is released for insertion. This process is regulated by ATP binding and hydrolysis. ATP binding drives the homodimer towards the closed dimer state, facilitating recognition of newly synthesized TA membrane proteins. ATP hydrolysis is required for insertion. Subsequently, the homodimer reverts towards the open dimer state, lowering its affinity for the membrane-bound receptor, and returning it to the cytosol to initiate a new round of targeting.</text>
</comment>
<comment type="subunit">
    <text evidence="1">Homodimer.</text>
</comment>
<comment type="subcellular location">
    <subcellularLocation>
        <location evidence="1">Cytoplasm</location>
    </subcellularLocation>
    <subcellularLocation>
        <location evidence="1">Endoplasmic reticulum</location>
    </subcellularLocation>
</comment>
<comment type="similarity">
    <text evidence="1">Belongs to the arsA ATPase family.</text>
</comment>
<accession>C1G182</accession>
<name>GET3_PARBD</name>
<feature type="chain" id="PRO_0000388219" description="ATPase GET3">
    <location>
        <begin position="1"/>
        <end position="341"/>
    </location>
</feature>
<feature type="active site" evidence="1">
    <location>
        <position position="63"/>
    </location>
</feature>
<feature type="binding site" evidence="1">
    <location>
        <begin position="34"/>
        <end position="41"/>
    </location>
    <ligand>
        <name>ATP</name>
        <dbReference type="ChEBI" id="CHEBI:30616"/>
    </ligand>
</feature>
<feature type="binding site" evidence="1">
    <location>
        <position position="245"/>
    </location>
    <ligand>
        <name>ATP</name>
        <dbReference type="ChEBI" id="CHEBI:30616"/>
    </ligand>
</feature>
<feature type="binding site" evidence="1">
    <location>
        <position position="272"/>
    </location>
    <ligand>
        <name>ATP</name>
        <dbReference type="ChEBI" id="CHEBI:30616"/>
    </ligand>
</feature>
<feature type="binding site" evidence="1">
    <location>
        <position position="283"/>
    </location>
    <ligand>
        <name>Zn(2+)</name>
        <dbReference type="ChEBI" id="CHEBI:29105"/>
        <note>ligand shared between dimeric partners</note>
    </ligand>
</feature>
<feature type="binding site" evidence="1">
    <location>
        <position position="286"/>
    </location>
    <ligand>
        <name>Zn(2+)</name>
        <dbReference type="ChEBI" id="CHEBI:29105"/>
        <note>ligand shared between dimeric partners</note>
    </ligand>
</feature>
<keyword id="KW-0067">ATP-binding</keyword>
<keyword id="KW-0963">Cytoplasm</keyword>
<keyword id="KW-0256">Endoplasmic reticulum</keyword>
<keyword id="KW-0378">Hydrolase</keyword>
<keyword id="KW-0479">Metal-binding</keyword>
<keyword id="KW-0547">Nucleotide-binding</keyword>
<keyword id="KW-1185">Reference proteome</keyword>
<keyword id="KW-0813">Transport</keyword>
<keyword id="KW-0862">Zinc</keyword>
<organism>
    <name type="scientific">Paracoccidioides brasiliensis (strain Pb18)</name>
    <dbReference type="NCBI Taxonomy" id="502780"/>
    <lineage>
        <taxon>Eukaryota</taxon>
        <taxon>Fungi</taxon>
        <taxon>Dikarya</taxon>
        <taxon>Ascomycota</taxon>
        <taxon>Pezizomycotina</taxon>
        <taxon>Eurotiomycetes</taxon>
        <taxon>Eurotiomycetidae</taxon>
        <taxon>Onygenales</taxon>
        <taxon>Ajellomycetaceae</taxon>
        <taxon>Paracoccidioides</taxon>
    </lineage>
</organism>
<protein>
    <recommendedName>
        <fullName evidence="1">ATPase GET3</fullName>
        <ecNumber evidence="1">3.6.-.-</ecNumber>
    </recommendedName>
    <alternativeName>
        <fullName evidence="1">Arsenical pump-driving ATPase</fullName>
    </alternativeName>
    <alternativeName>
        <fullName evidence="1">Arsenite-stimulated ATPase</fullName>
    </alternativeName>
    <alternativeName>
        <fullName evidence="1">Golgi to ER traffic protein 3</fullName>
    </alternativeName>
    <alternativeName>
        <fullName evidence="1">Guided entry of tail-anchored proteins 3</fullName>
    </alternativeName>
</protein>
<sequence length="341" mass="37428">MSSAAMVKAEDSLEPTLQNLLDQKTLRWVFVGGKGGVGKTTTSCSLAIQLAKVRKSVLLISTDPAHNLSDAFGQKFGKEARLIDGFTNLSAMEIDPNGSIQDLLAAGGGQGDDSMGGLGIGGMMQDLAFSIPGVDEAMSFAEVLKQVKSLSYEVIIFDTAPTGHTLRFLQFPTVLEKALAKLAQLSTQFGPMLNSILGGRGGLPGGQNLDEILSKMESLRETIAEVNAQFKDADLTTFVCVCIAEFLSLYETERMIQELTSYHIDTHCIVVNQLLFPGKDSSCEQCKARRKMQKKYLNEIEELYEDFNVVRMPMLVEEVRGKEKLEKFSDMLIHPYVPPQE</sequence>